<reference key="1">
    <citation type="journal article" date="2006" name="Proc. Natl. Acad. Sci. U.S.A.">
        <title>Genome reduction in Leptospira borgpetersenii reflects limited transmission potential.</title>
        <authorList>
            <person name="Bulach D.M."/>
            <person name="Zuerner R.L."/>
            <person name="Wilson P."/>
            <person name="Seemann T."/>
            <person name="McGrath A."/>
            <person name="Cullen P.A."/>
            <person name="Davis J."/>
            <person name="Johnson M."/>
            <person name="Kuczek E."/>
            <person name="Alt D.P."/>
            <person name="Peterson-Burch B."/>
            <person name="Coppel R.L."/>
            <person name="Rood J.I."/>
            <person name="Davies J.K."/>
            <person name="Adler B."/>
        </authorList>
    </citation>
    <scope>NUCLEOTIDE SEQUENCE [LARGE SCALE GENOMIC DNA]</scope>
    <source>
        <strain>L550</strain>
    </source>
</reference>
<gene>
    <name evidence="1" type="primary">glyA</name>
    <name type="ordered locus">LBL_2127</name>
</gene>
<sequence length="415" mass="45085">MQFLPKADPEIFAALKKEDERQENNLEMIASENFVSRAVLEAYTSTLTNKYAEGYPGKRYYNGCHNADIVESLAIERAKELFGAEYANVQPHSGAQANMAVFLACLEPGDSFLGMNLAHGGHLTHGSPVNVSGRIYKPIPYGVDSKTETIDYDEIAKLAREHKPKLIVAGASAYARTIDFSKFAEIAKEVGAKLMADIAHISGLVSTGYHPSPVGLFDFVTTTTHKTLRGPRGGLILSTLENEKVLNSRVFPGIQGGPLMHVIAAKAVAFKEALQPEYKKYIEIVLANAKTLAEVFLKRGYRVVSGGTDNHLVLLDVSVKGLTGVQAADGLDEVGVTVNKNAIPFDKNPPAVASGIRLGTPALTTRGLKPADMETVGNLICDFLDNPNEEKNKKRVKGGVQEITRKFPMDQFRLD</sequence>
<keyword id="KW-0028">Amino-acid biosynthesis</keyword>
<keyword id="KW-0963">Cytoplasm</keyword>
<keyword id="KW-0554">One-carbon metabolism</keyword>
<keyword id="KW-0663">Pyridoxal phosphate</keyword>
<keyword id="KW-0808">Transferase</keyword>
<feature type="chain" id="PRO_1000006277" description="Serine hydroxymethyltransferase">
    <location>
        <begin position="1"/>
        <end position="415"/>
    </location>
</feature>
<feature type="binding site" evidence="1">
    <location>
        <position position="117"/>
    </location>
    <ligand>
        <name>(6S)-5,6,7,8-tetrahydrofolate</name>
        <dbReference type="ChEBI" id="CHEBI:57453"/>
    </ligand>
</feature>
<feature type="binding site" evidence="1">
    <location>
        <begin position="121"/>
        <end position="123"/>
    </location>
    <ligand>
        <name>(6S)-5,6,7,8-tetrahydrofolate</name>
        <dbReference type="ChEBI" id="CHEBI:57453"/>
    </ligand>
</feature>
<feature type="site" description="Plays an important role in substrate specificity" evidence="1">
    <location>
        <position position="225"/>
    </location>
</feature>
<feature type="modified residue" description="N6-(pyridoxal phosphate)lysine" evidence="1">
    <location>
        <position position="226"/>
    </location>
</feature>
<organism>
    <name type="scientific">Leptospira borgpetersenii serovar Hardjo-bovis (strain L550)</name>
    <dbReference type="NCBI Taxonomy" id="355276"/>
    <lineage>
        <taxon>Bacteria</taxon>
        <taxon>Pseudomonadati</taxon>
        <taxon>Spirochaetota</taxon>
        <taxon>Spirochaetia</taxon>
        <taxon>Leptospirales</taxon>
        <taxon>Leptospiraceae</taxon>
        <taxon>Leptospira</taxon>
    </lineage>
</organism>
<evidence type="ECO:0000255" key="1">
    <source>
        <dbReference type="HAMAP-Rule" id="MF_00051"/>
    </source>
</evidence>
<comment type="function">
    <text evidence="1">Catalyzes the reversible interconversion of serine and glycine with tetrahydrofolate (THF) serving as the one-carbon carrier. This reaction serves as the major source of one-carbon groups required for the biosynthesis of purines, thymidylate, methionine, and other important biomolecules. Also exhibits THF-independent aldolase activity toward beta-hydroxyamino acids, producing glycine and aldehydes, via a retro-aldol mechanism.</text>
</comment>
<comment type="catalytic activity">
    <reaction evidence="1">
        <text>(6R)-5,10-methylene-5,6,7,8-tetrahydrofolate + glycine + H2O = (6S)-5,6,7,8-tetrahydrofolate + L-serine</text>
        <dbReference type="Rhea" id="RHEA:15481"/>
        <dbReference type="ChEBI" id="CHEBI:15377"/>
        <dbReference type="ChEBI" id="CHEBI:15636"/>
        <dbReference type="ChEBI" id="CHEBI:33384"/>
        <dbReference type="ChEBI" id="CHEBI:57305"/>
        <dbReference type="ChEBI" id="CHEBI:57453"/>
        <dbReference type="EC" id="2.1.2.1"/>
    </reaction>
</comment>
<comment type="cofactor">
    <cofactor evidence="1">
        <name>pyridoxal 5'-phosphate</name>
        <dbReference type="ChEBI" id="CHEBI:597326"/>
    </cofactor>
</comment>
<comment type="pathway">
    <text evidence="1">One-carbon metabolism; tetrahydrofolate interconversion.</text>
</comment>
<comment type="pathway">
    <text evidence="1">Amino-acid biosynthesis; glycine biosynthesis; glycine from L-serine: step 1/1.</text>
</comment>
<comment type="subunit">
    <text evidence="1">Homodimer.</text>
</comment>
<comment type="subcellular location">
    <subcellularLocation>
        <location evidence="1">Cytoplasm</location>
    </subcellularLocation>
</comment>
<comment type="similarity">
    <text evidence="1">Belongs to the SHMT family.</text>
</comment>
<name>GLYA_LEPBL</name>
<protein>
    <recommendedName>
        <fullName evidence="1">Serine hydroxymethyltransferase</fullName>
        <shortName evidence="1">SHMT</shortName>
        <shortName evidence="1">Serine methylase</shortName>
        <ecNumber evidence="1">2.1.2.1</ecNumber>
    </recommendedName>
</protein>
<accession>Q04ZF5</accession>
<dbReference type="EC" id="2.1.2.1" evidence="1"/>
<dbReference type="EMBL" id="CP000348">
    <property type="protein sequence ID" value="ABJ79540.1"/>
    <property type="molecule type" value="Genomic_DNA"/>
</dbReference>
<dbReference type="RefSeq" id="WP_002726164.1">
    <property type="nucleotide sequence ID" value="NC_008508.1"/>
</dbReference>
<dbReference type="SMR" id="Q04ZF5"/>
<dbReference type="GeneID" id="61174795"/>
<dbReference type="KEGG" id="lbl:LBL_2127"/>
<dbReference type="HOGENOM" id="CLU_022477_2_1_12"/>
<dbReference type="UniPathway" id="UPA00193"/>
<dbReference type="UniPathway" id="UPA00288">
    <property type="reaction ID" value="UER01023"/>
</dbReference>
<dbReference type="GO" id="GO:0005829">
    <property type="term" value="C:cytosol"/>
    <property type="evidence" value="ECO:0007669"/>
    <property type="project" value="TreeGrafter"/>
</dbReference>
<dbReference type="GO" id="GO:0004372">
    <property type="term" value="F:glycine hydroxymethyltransferase activity"/>
    <property type="evidence" value="ECO:0007669"/>
    <property type="project" value="UniProtKB-UniRule"/>
</dbReference>
<dbReference type="GO" id="GO:0030170">
    <property type="term" value="F:pyridoxal phosphate binding"/>
    <property type="evidence" value="ECO:0007669"/>
    <property type="project" value="UniProtKB-UniRule"/>
</dbReference>
<dbReference type="GO" id="GO:0019264">
    <property type="term" value="P:glycine biosynthetic process from serine"/>
    <property type="evidence" value="ECO:0007669"/>
    <property type="project" value="UniProtKB-UniRule"/>
</dbReference>
<dbReference type="GO" id="GO:0035999">
    <property type="term" value="P:tetrahydrofolate interconversion"/>
    <property type="evidence" value="ECO:0007669"/>
    <property type="project" value="UniProtKB-UniRule"/>
</dbReference>
<dbReference type="CDD" id="cd00378">
    <property type="entry name" value="SHMT"/>
    <property type="match status" value="1"/>
</dbReference>
<dbReference type="FunFam" id="3.40.640.10:FF:000001">
    <property type="entry name" value="Serine hydroxymethyltransferase"/>
    <property type="match status" value="1"/>
</dbReference>
<dbReference type="Gene3D" id="3.90.1150.10">
    <property type="entry name" value="Aspartate Aminotransferase, domain 1"/>
    <property type="match status" value="1"/>
</dbReference>
<dbReference type="Gene3D" id="3.40.640.10">
    <property type="entry name" value="Type I PLP-dependent aspartate aminotransferase-like (Major domain)"/>
    <property type="match status" value="1"/>
</dbReference>
<dbReference type="HAMAP" id="MF_00051">
    <property type="entry name" value="SHMT"/>
    <property type="match status" value="1"/>
</dbReference>
<dbReference type="InterPro" id="IPR015424">
    <property type="entry name" value="PyrdxlP-dep_Trfase"/>
</dbReference>
<dbReference type="InterPro" id="IPR015421">
    <property type="entry name" value="PyrdxlP-dep_Trfase_major"/>
</dbReference>
<dbReference type="InterPro" id="IPR015422">
    <property type="entry name" value="PyrdxlP-dep_Trfase_small"/>
</dbReference>
<dbReference type="InterPro" id="IPR001085">
    <property type="entry name" value="Ser_HO-MeTrfase"/>
</dbReference>
<dbReference type="InterPro" id="IPR049943">
    <property type="entry name" value="Ser_HO-MeTrfase-like"/>
</dbReference>
<dbReference type="InterPro" id="IPR019798">
    <property type="entry name" value="Ser_HO-MeTrfase_PLP_BS"/>
</dbReference>
<dbReference type="InterPro" id="IPR039429">
    <property type="entry name" value="SHMT-like_dom"/>
</dbReference>
<dbReference type="NCBIfam" id="NF000586">
    <property type="entry name" value="PRK00011.1"/>
    <property type="match status" value="1"/>
</dbReference>
<dbReference type="PANTHER" id="PTHR11680">
    <property type="entry name" value="SERINE HYDROXYMETHYLTRANSFERASE"/>
    <property type="match status" value="1"/>
</dbReference>
<dbReference type="PANTHER" id="PTHR11680:SF35">
    <property type="entry name" value="SERINE HYDROXYMETHYLTRANSFERASE 1"/>
    <property type="match status" value="1"/>
</dbReference>
<dbReference type="Pfam" id="PF00464">
    <property type="entry name" value="SHMT"/>
    <property type="match status" value="1"/>
</dbReference>
<dbReference type="PIRSF" id="PIRSF000412">
    <property type="entry name" value="SHMT"/>
    <property type="match status" value="1"/>
</dbReference>
<dbReference type="SUPFAM" id="SSF53383">
    <property type="entry name" value="PLP-dependent transferases"/>
    <property type="match status" value="1"/>
</dbReference>
<dbReference type="PROSITE" id="PS00096">
    <property type="entry name" value="SHMT"/>
    <property type="match status" value="1"/>
</dbReference>
<proteinExistence type="inferred from homology"/>